<name>RAPZ_ECODH</name>
<protein>
    <recommendedName>
        <fullName evidence="1">RNase adapter protein RapZ</fullName>
    </recommendedName>
</protein>
<comment type="function">
    <text evidence="1">Modulates the synthesis of GlmS, by affecting the processing and stability of the regulatory small RNA GlmZ. When glucosamine-6-phosphate (GlcN6P) concentrations are high in the cell, RapZ binds GlmZ and targets it to cleavage by RNase E. Consequently, GlmZ is inactivated and unable to activate GlmS synthesis. Under low GlcN6P concentrations, RapZ is sequestered and inactivated by an other regulatory small RNA, GlmY, preventing GlmZ degradation and leading to synthesis of GlmS.</text>
</comment>
<comment type="subunit">
    <text evidence="1">Homotrimer.</text>
</comment>
<comment type="similarity">
    <text evidence="1">Belongs to the RapZ-like family. RapZ subfamily.</text>
</comment>
<keyword id="KW-0067">ATP-binding</keyword>
<keyword id="KW-0342">GTP-binding</keyword>
<keyword id="KW-0547">Nucleotide-binding</keyword>
<keyword id="KW-0694">RNA-binding</keyword>
<feature type="chain" id="PRO_1000130752" description="RNase adapter protein RapZ">
    <location>
        <begin position="1"/>
        <end position="284"/>
    </location>
</feature>
<feature type="region of interest" description="RNA-binding" evidence="1">
    <location>
        <begin position="266"/>
        <end position="284"/>
    </location>
</feature>
<feature type="binding site" evidence="1">
    <location>
        <begin position="8"/>
        <end position="15"/>
    </location>
    <ligand>
        <name>ATP</name>
        <dbReference type="ChEBI" id="CHEBI:30616"/>
    </ligand>
</feature>
<feature type="binding site" evidence="1">
    <location>
        <begin position="56"/>
        <end position="59"/>
    </location>
    <ligand>
        <name>GTP</name>
        <dbReference type="ChEBI" id="CHEBI:37565"/>
    </ligand>
</feature>
<evidence type="ECO:0000255" key="1">
    <source>
        <dbReference type="HAMAP-Rule" id="MF_00636"/>
    </source>
</evidence>
<gene>
    <name evidence="1" type="primary">rapZ</name>
    <name type="ordered locus">ECDH10B_3379</name>
</gene>
<dbReference type="EMBL" id="CP000948">
    <property type="protein sequence ID" value="ACB04281.1"/>
    <property type="molecule type" value="Genomic_DNA"/>
</dbReference>
<dbReference type="RefSeq" id="WP_000243741.1">
    <property type="nucleotide sequence ID" value="NC_010473.1"/>
</dbReference>
<dbReference type="SMR" id="B1XHI0"/>
<dbReference type="GeneID" id="93778776"/>
<dbReference type="KEGG" id="ecd:ECDH10B_3379"/>
<dbReference type="HOGENOM" id="CLU_059558_1_1_6"/>
<dbReference type="GO" id="GO:0005524">
    <property type="term" value="F:ATP binding"/>
    <property type="evidence" value="ECO:0007669"/>
    <property type="project" value="UniProtKB-UniRule"/>
</dbReference>
<dbReference type="GO" id="GO:0005525">
    <property type="term" value="F:GTP binding"/>
    <property type="evidence" value="ECO:0007669"/>
    <property type="project" value="UniProtKB-UniRule"/>
</dbReference>
<dbReference type="GO" id="GO:0003723">
    <property type="term" value="F:RNA binding"/>
    <property type="evidence" value="ECO:0007669"/>
    <property type="project" value="UniProtKB-KW"/>
</dbReference>
<dbReference type="Gene3D" id="3.40.50.300">
    <property type="entry name" value="P-loop containing nucleotide triphosphate hydrolases"/>
    <property type="match status" value="1"/>
</dbReference>
<dbReference type="HAMAP" id="MF_00636">
    <property type="entry name" value="RapZ_like"/>
    <property type="match status" value="1"/>
</dbReference>
<dbReference type="InterPro" id="IPR027417">
    <property type="entry name" value="P-loop_NTPase"/>
</dbReference>
<dbReference type="InterPro" id="IPR005337">
    <property type="entry name" value="RapZ-like"/>
</dbReference>
<dbReference type="InterPro" id="IPR053930">
    <property type="entry name" value="RapZ-like_N"/>
</dbReference>
<dbReference type="InterPro" id="IPR053931">
    <property type="entry name" value="RapZ_C"/>
</dbReference>
<dbReference type="NCBIfam" id="NF003828">
    <property type="entry name" value="PRK05416.1"/>
    <property type="match status" value="1"/>
</dbReference>
<dbReference type="PANTHER" id="PTHR30448">
    <property type="entry name" value="RNASE ADAPTER PROTEIN RAPZ"/>
    <property type="match status" value="1"/>
</dbReference>
<dbReference type="PANTHER" id="PTHR30448:SF0">
    <property type="entry name" value="RNASE ADAPTER PROTEIN RAPZ"/>
    <property type="match status" value="1"/>
</dbReference>
<dbReference type="Pfam" id="PF22740">
    <property type="entry name" value="PapZ_C"/>
    <property type="match status" value="1"/>
</dbReference>
<dbReference type="Pfam" id="PF03668">
    <property type="entry name" value="RapZ-like_N"/>
    <property type="match status" value="1"/>
</dbReference>
<dbReference type="PIRSF" id="PIRSF005052">
    <property type="entry name" value="P-loopkin"/>
    <property type="match status" value="1"/>
</dbReference>
<dbReference type="SUPFAM" id="SSF52540">
    <property type="entry name" value="P-loop containing nucleoside triphosphate hydrolases"/>
    <property type="match status" value="1"/>
</dbReference>
<proteinExistence type="inferred from homology"/>
<sequence length="284" mass="32492">MVLMIVSGRSGSGKSVALRALEDMGFYCVDNLPVVLLPDLARTLADREISAAVSIDVRNMPESPEIFEQAMSNLPDAFSPQLLFLDADRNTLIRRYSDTRRLHPLSSKNLSLESAIDKESDLLEPLRSRADLIVDTSEMSVHELAEMLRTRLLGKRERELTMVFESFGFKHGIPIDADYVFDVRFLPNPHWDPKLRPMTGLDKPVAAFLDRHTEVHNFIYQTRSYLELWLPMLETNNRSYLTVAIGCTGGKHRSVYIAEQLADYFRSRGKNVQSRHRTLEKRKP</sequence>
<organism>
    <name type="scientific">Escherichia coli (strain K12 / DH10B)</name>
    <dbReference type="NCBI Taxonomy" id="316385"/>
    <lineage>
        <taxon>Bacteria</taxon>
        <taxon>Pseudomonadati</taxon>
        <taxon>Pseudomonadota</taxon>
        <taxon>Gammaproteobacteria</taxon>
        <taxon>Enterobacterales</taxon>
        <taxon>Enterobacteriaceae</taxon>
        <taxon>Escherichia</taxon>
    </lineage>
</organism>
<accession>B1XHI0</accession>
<reference key="1">
    <citation type="journal article" date="2008" name="J. Bacteriol.">
        <title>The complete genome sequence of Escherichia coli DH10B: insights into the biology of a laboratory workhorse.</title>
        <authorList>
            <person name="Durfee T."/>
            <person name="Nelson R."/>
            <person name="Baldwin S."/>
            <person name="Plunkett G. III"/>
            <person name="Burland V."/>
            <person name="Mau B."/>
            <person name="Petrosino J.F."/>
            <person name="Qin X."/>
            <person name="Muzny D.M."/>
            <person name="Ayele M."/>
            <person name="Gibbs R.A."/>
            <person name="Csorgo B."/>
            <person name="Posfai G."/>
            <person name="Weinstock G.M."/>
            <person name="Blattner F.R."/>
        </authorList>
    </citation>
    <scope>NUCLEOTIDE SEQUENCE [LARGE SCALE GENOMIC DNA]</scope>
    <source>
        <strain>K12 / DH10B</strain>
    </source>
</reference>